<comment type="function">
    <text evidence="1">One of several proteins that assist in the late maturation steps of the functional core of the 30S ribosomal subunit. Helps release RbfA from mature subunits. May play a role in the assembly of ribosomal proteins into the subunit. Circularly permuted GTPase that catalyzes slow GTP hydrolysis, GTPase activity is stimulated by the 30S ribosomal subunit.</text>
</comment>
<comment type="cofactor">
    <cofactor evidence="1">
        <name>Zn(2+)</name>
        <dbReference type="ChEBI" id="CHEBI:29105"/>
    </cofactor>
    <text evidence="1">Binds 1 zinc ion per subunit.</text>
</comment>
<comment type="subunit">
    <text evidence="1">Monomer. Associates with 30S ribosomal subunit, binds 16S rRNA.</text>
</comment>
<comment type="subcellular location">
    <subcellularLocation>
        <location evidence="1">Cytoplasm</location>
    </subcellularLocation>
</comment>
<comment type="similarity">
    <text evidence="1">Belongs to the TRAFAC class YlqF/YawG GTPase family. RsgA subfamily.</text>
</comment>
<sequence length="302" mass="34290">MTGKIIKGIAGFYYVYVEETKEAKETATGGTLYECKAKGTFRKQKIKPLVGDTVDIAVLDEEKHIGNVERILPRKNELIRPAVSNIDMALVIFASAKPDPNFNLLDRFLCMMEYQHVPVTICFNKKDLITPQKQQELKSIYEPAGYRVMFTSTKTGEGIDEIKHVLEGRTTTVAGPSGVGKSSIINCLQDDVQMETGHISEKIERGKHTTRHSEIIPIKDGTYIMDTPGFSSMDVPGFEKEDLWTCYPEFVEYEPYCRFQGCSHINEPDCGVKEALSEGKISQVRYDNYKLLYEELKNRQKY</sequence>
<accession>C4ZEV1</accession>
<feature type="chain" id="PRO_1000216040" description="Small ribosomal subunit biogenesis GTPase RsgA">
    <location>
        <begin position="1"/>
        <end position="302"/>
    </location>
</feature>
<feature type="domain" description="CP-type G" evidence="2">
    <location>
        <begin position="75"/>
        <end position="233"/>
    </location>
</feature>
<feature type="binding site" evidence="1">
    <location>
        <begin position="124"/>
        <end position="127"/>
    </location>
    <ligand>
        <name>GTP</name>
        <dbReference type="ChEBI" id="CHEBI:37565"/>
    </ligand>
</feature>
<feature type="binding site" evidence="1">
    <location>
        <begin position="175"/>
        <end position="183"/>
    </location>
    <ligand>
        <name>GTP</name>
        <dbReference type="ChEBI" id="CHEBI:37565"/>
    </ligand>
</feature>
<feature type="binding site" evidence="1">
    <location>
        <position position="257"/>
    </location>
    <ligand>
        <name>Zn(2+)</name>
        <dbReference type="ChEBI" id="CHEBI:29105"/>
    </ligand>
</feature>
<feature type="binding site" evidence="1">
    <location>
        <position position="262"/>
    </location>
    <ligand>
        <name>Zn(2+)</name>
        <dbReference type="ChEBI" id="CHEBI:29105"/>
    </ligand>
</feature>
<feature type="binding site" evidence="1">
    <location>
        <position position="264"/>
    </location>
    <ligand>
        <name>Zn(2+)</name>
        <dbReference type="ChEBI" id="CHEBI:29105"/>
    </ligand>
</feature>
<feature type="binding site" evidence="1">
    <location>
        <position position="270"/>
    </location>
    <ligand>
        <name>Zn(2+)</name>
        <dbReference type="ChEBI" id="CHEBI:29105"/>
    </ligand>
</feature>
<keyword id="KW-0963">Cytoplasm</keyword>
<keyword id="KW-0342">GTP-binding</keyword>
<keyword id="KW-0378">Hydrolase</keyword>
<keyword id="KW-0479">Metal-binding</keyword>
<keyword id="KW-0547">Nucleotide-binding</keyword>
<keyword id="KW-0690">Ribosome biogenesis</keyword>
<keyword id="KW-0694">RNA-binding</keyword>
<keyword id="KW-0699">rRNA-binding</keyword>
<keyword id="KW-0862">Zinc</keyword>
<evidence type="ECO:0000255" key="1">
    <source>
        <dbReference type="HAMAP-Rule" id="MF_01820"/>
    </source>
</evidence>
<evidence type="ECO:0000255" key="2">
    <source>
        <dbReference type="PROSITE-ProRule" id="PRU01058"/>
    </source>
</evidence>
<organism>
    <name type="scientific">Agathobacter rectalis (strain ATCC 33656 / DSM 3377 / JCM 17463 / KCTC 5835 / VPI 0990)</name>
    <name type="common">Eubacterium rectale</name>
    <dbReference type="NCBI Taxonomy" id="515619"/>
    <lineage>
        <taxon>Bacteria</taxon>
        <taxon>Bacillati</taxon>
        <taxon>Bacillota</taxon>
        <taxon>Clostridia</taxon>
        <taxon>Lachnospirales</taxon>
        <taxon>Lachnospiraceae</taxon>
        <taxon>Agathobacter</taxon>
    </lineage>
</organism>
<gene>
    <name evidence="1" type="primary">rsgA</name>
    <name type="ordered locus">EUBREC_2338</name>
</gene>
<dbReference type="EC" id="3.6.1.-" evidence="1"/>
<dbReference type="EMBL" id="CP001107">
    <property type="protein sequence ID" value="ACR76072.1"/>
    <property type="molecule type" value="Genomic_DNA"/>
</dbReference>
<dbReference type="RefSeq" id="WP_012743166.1">
    <property type="nucleotide sequence ID" value="NC_012781.1"/>
</dbReference>
<dbReference type="SMR" id="C4ZEV1"/>
<dbReference type="STRING" id="515619.EUBREC_2338"/>
<dbReference type="PaxDb" id="515619-EUBREC_2338"/>
<dbReference type="GeneID" id="86989102"/>
<dbReference type="KEGG" id="ere:EUBREC_2338"/>
<dbReference type="HOGENOM" id="CLU_033617_2_1_9"/>
<dbReference type="Proteomes" id="UP000001477">
    <property type="component" value="Chromosome"/>
</dbReference>
<dbReference type="GO" id="GO:0005737">
    <property type="term" value="C:cytoplasm"/>
    <property type="evidence" value="ECO:0007669"/>
    <property type="project" value="UniProtKB-SubCell"/>
</dbReference>
<dbReference type="GO" id="GO:0005525">
    <property type="term" value="F:GTP binding"/>
    <property type="evidence" value="ECO:0007669"/>
    <property type="project" value="UniProtKB-UniRule"/>
</dbReference>
<dbReference type="GO" id="GO:0003924">
    <property type="term" value="F:GTPase activity"/>
    <property type="evidence" value="ECO:0007669"/>
    <property type="project" value="UniProtKB-UniRule"/>
</dbReference>
<dbReference type="GO" id="GO:0046872">
    <property type="term" value="F:metal ion binding"/>
    <property type="evidence" value="ECO:0007669"/>
    <property type="project" value="UniProtKB-KW"/>
</dbReference>
<dbReference type="GO" id="GO:0019843">
    <property type="term" value="F:rRNA binding"/>
    <property type="evidence" value="ECO:0007669"/>
    <property type="project" value="UniProtKB-KW"/>
</dbReference>
<dbReference type="GO" id="GO:0042274">
    <property type="term" value="P:ribosomal small subunit biogenesis"/>
    <property type="evidence" value="ECO:0007669"/>
    <property type="project" value="UniProtKB-UniRule"/>
</dbReference>
<dbReference type="CDD" id="cd04466">
    <property type="entry name" value="S1_YloQ_GTPase"/>
    <property type="match status" value="1"/>
</dbReference>
<dbReference type="CDD" id="cd01854">
    <property type="entry name" value="YjeQ_EngC"/>
    <property type="match status" value="1"/>
</dbReference>
<dbReference type="Gene3D" id="2.40.50.140">
    <property type="entry name" value="Nucleic acid-binding proteins"/>
    <property type="match status" value="1"/>
</dbReference>
<dbReference type="Gene3D" id="3.40.50.300">
    <property type="entry name" value="P-loop containing nucleotide triphosphate hydrolases"/>
    <property type="match status" value="1"/>
</dbReference>
<dbReference type="Gene3D" id="1.10.40.50">
    <property type="entry name" value="Probable gtpase engc, domain 3"/>
    <property type="match status" value="1"/>
</dbReference>
<dbReference type="HAMAP" id="MF_01820">
    <property type="entry name" value="GTPase_RsgA"/>
    <property type="match status" value="1"/>
</dbReference>
<dbReference type="InterPro" id="IPR030378">
    <property type="entry name" value="G_CP_dom"/>
</dbReference>
<dbReference type="InterPro" id="IPR012340">
    <property type="entry name" value="NA-bd_OB-fold"/>
</dbReference>
<dbReference type="InterPro" id="IPR027417">
    <property type="entry name" value="P-loop_NTPase"/>
</dbReference>
<dbReference type="InterPro" id="IPR004881">
    <property type="entry name" value="Ribosome_biogen_GTPase_RsgA"/>
</dbReference>
<dbReference type="InterPro" id="IPR010914">
    <property type="entry name" value="RsgA_GTPase_dom"/>
</dbReference>
<dbReference type="InterPro" id="IPR031944">
    <property type="entry name" value="RsgA_N"/>
</dbReference>
<dbReference type="NCBIfam" id="TIGR00157">
    <property type="entry name" value="ribosome small subunit-dependent GTPase A"/>
    <property type="match status" value="1"/>
</dbReference>
<dbReference type="PANTHER" id="PTHR32120">
    <property type="entry name" value="SMALL RIBOSOMAL SUBUNIT BIOGENESIS GTPASE RSGA"/>
    <property type="match status" value="1"/>
</dbReference>
<dbReference type="PANTHER" id="PTHR32120:SF11">
    <property type="entry name" value="SMALL RIBOSOMAL SUBUNIT BIOGENESIS GTPASE RSGA 1, MITOCHONDRIAL-RELATED"/>
    <property type="match status" value="1"/>
</dbReference>
<dbReference type="Pfam" id="PF03193">
    <property type="entry name" value="RsgA_GTPase"/>
    <property type="match status" value="1"/>
</dbReference>
<dbReference type="Pfam" id="PF16745">
    <property type="entry name" value="RsgA_N"/>
    <property type="match status" value="1"/>
</dbReference>
<dbReference type="SUPFAM" id="SSF50249">
    <property type="entry name" value="Nucleic acid-binding proteins"/>
    <property type="match status" value="1"/>
</dbReference>
<dbReference type="SUPFAM" id="SSF52540">
    <property type="entry name" value="P-loop containing nucleoside triphosphate hydrolases"/>
    <property type="match status" value="1"/>
</dbReference>
<dbReference type="PROSITE" id="PS50936">
    <property type="entry name" value="ENGC_GTPASE"/>
    <property type="match status" value="1"/>
</dbReference>
<dbReference type="PROSITE" id="PS51721">
    <property type="entry name" value="G_CP"/>
    <property type="match status" value="1"/>
</dbReference>
<proteinExistence type="inferred from homology"/>
<name>RSGA_AGARV</name>
<protein>
    <recommendedName>
        <fullName evidence="1">Small ribosomal subunit biogenesis GTPase RsgA</fullName>
        <ecNumber evidence="1">3.6.1.-</ecNumber>
    </recommendedName>
</protein>
<reference key="1">
    <citation type="journal article" date="2009" name="Proc. Natl. Acad. Sci. U.S.A.">
        <title>Characterizing a model human gut microbiota composed of members of its two dominant bacterial phyla.</title>
        <authorList>
            <person name="Mahowald M.A."/>
            <person name="Rey F.E."/>
            <person name="Seedorf H."/>
            <person name="Turnbaugh P.J."/>
            <person name="Fulton R.S."/>
            <person name="Wollam A."/>
            <person name="Shah N."/>
            <person name="Wang C."/>
            <person name="Magrini V."/>
            <person name="Wilson R.K."/>
            <person name="Cantarel B.L."/>
            <person name="Coutinho P.M."/>
            <person name="Henrissat B."/>
            <person name="Crock L.W."/>
            <person name="Russell A."/>
            <person name="Verberkmoes N.C."/>
            <person name="Hettich R.L."/>
            <person name="Gordon J.I."/>
        </authorList>
    </citation>
    <scope>NUCLEOTIDE SEQUENCE [LARGE SCALE GENOMIC DNA]</scope>
    <source>
        <strain>ATCC 33656 / DSM 3377 / JCM 17463 / KCTC 5835 / LMG 30912 / VPI 0990</strain>
    </source>
</reference>